<accession>B5XBP5</accession>
<dbReference type="EMBL" id="BT048464">
    <property type="protein sequence ID" value="ACI68265.1"/>
    <property type="molecule type" value="mRNA"/>
</dbReference>
<dbReference type="RefSeq" id="NP_001134629.1">
    <property type="nucleotide sequence ID" value="NM_001141157.2"/>
</dbReference>
<dbReference type="STRING" id="8030.ENSSSAP00000056079"/>
<dbReference type="PaxDb" id="8030-ENSSSAP00000056079"/>
<dbReference type="Ensembl" id="ENSSSAT00020047625">
    <property type="protein sequence ID" value="ENSSSAP00020041332"/>
    <property type="gene ID" value="ENSSSAG00020018011"/>
</dbReference>
<dbReference type="Ensembl" id="ENSSSAT00070069707">
    <property type="protein sequence ID" value="ENSSSAP00070066801"/>
    <property type="gene ID" value="ENSSSAG00070043340"/>
</dbReference>
<dbReference type="Ensembl" id="ENSSSAT00075048477">
    <property type="protein sequence ID" value="ENSSSAP00075033901"/>
    <property type="gene ID" value="ENSSSAG00075023326"/>
</dbReference>
<dbReference type="GeneID" id="100196128"/>
<dbReference type="KEGG" id="sasa:100196128"/>
<dbReference type="CTD" id="100196128"/>
<dbReference type="Proteomes" id="UP000087266">
    <property type="component" value="Chromosome ssa22"/>
</dbReference>
<dbReference type="Bgee" id="ENSSSAG00000053943">
    <property type="expression patterns" value="Expressed in ovary and 22 other cell types or tissues"/>
</dbReference>
<dbReference type="InterPro" id="IPR027850">
    <property type="entry name" value="DUF4504"/>
</dbReference>
<dbReference type="PANTHER" id="PTHR31366">
    <property type="entry name" value="UPF0739 PROTEIN C1ORF74"/>
    <property type="match status" value="1"/>
</dbReference>
<dbReference type="PANTHER" id="PTHR31366:SF2">
    <property type="entry name" value="UPF0739 PROTEIN C1ORF74"/>
    <property type="match status" value="1"/>
</dbReference>
<dbReference type="Pfam" id="PF14953">
    <property type="entry name" value="DUF4504"/>
    <property type="match status" value="1"/>
</dbReference>
<reference key="1">
    <citation type="journal article" date="2010" name="BMC Genomics">
        <title>Salmo salar and Esox lucius full-length cDNA sequences reveal changes in evolutionary pressures on a post-tetraploidization genome.</title>
        <authorList>
            <person name="Leong J.S."/>
            <person name="Jantzen S.G."/>
            <person name="von Schalburg K.R."/>
            <person name="Cooper G.A."/>
            <person name="Messmer A.M."/>
            <person name="Liao N.Y."/>
            <person name="Munro S."/>
            <person name="Moore R."/>
            <person name="Holt R.A."/>
            <person name="Jones S.J."/>
            <person name="Davidson W.S."/>
            <person name="Koop B.F."/>
        </authorList>
    </citation>
    <scope>NUCLEOTIDE SEQUENCE [LARGE SCALE MRNA]</scope>
    <source>
        <tissue>Brain</tissue>
    </source>
</reference>
<name>CA074_SALSA</name>
<keyword id="KW-1185">Reference proteome</keyword>
<organism>
    <name type="scientific">Salmo salar</name>
    <name type="common">Atlantic salmon</name>
    <dbReference type="NCBI Taxonomy" id="8030"/>
    <lineage>
        <taxon>Eukaryota</taxon>
        <taxon>Metazoa</taxon>
        <taxon>Chordata</taxon>
        <taxon>Craniata</taxon>
        <taxon>Vertebrata</taxon>
        <taxon>Euteleostomi</taxon>
        <taxon>Actinopterygii</taxon>
        <taxon>Neopterygii</taxon>
        <taxon>Teleostei</taxon>
        <taxon>Protacanthopterygii</taxon>
        <taxon>Salmoniformes</taxon>
        <taxon>Salmonidae</taxon>
        <taxon>Salmoninae</taxon>
        <taxon>Salmo</taxon>
    </lineage>
</organism>
<protein>
    <recommendedName>
        <fullName>UPF0739 protein C1orf74 homolog</fullName>
    </recommendedName>
</protein>
<feature type="chain" id="PRO_0000371345" description="UPF0739 protein C1orf74 homolog">
    <location>
        <begin position="1"/>
        <end position="268"/>
    </location>
</feature>
<proteinExistence type="evidence at transcript level"/>
<sequence length="268" mass="29557">MASSDVFVAAARKCLRVGKKRFSATVSLNLATQVLAVDLGLKPALLYDSNTASAEQVQQYLNSLQAAQLVSKSLQTLVISENSLIVNPSLTIANLEALLLRRTVTVVDVCHSLEQPAITELQWGAIRDMIQALLAHIRQFGQHSAMRNVPHRIEKRHCETWNLCTLFGILLGYPSTYWFDQSRSFENCLAMSPLVVTKAVASWQGGDSGVEGHRCCLYSFSTPEMLQADTQSVMASWTTQLQERFQQQKVLSGLSVTRSTVTLPSVAL</sequence>
<evidence type="ECO:0000305" key="1"/>
<comment type="similarity">
    <text evidence="1">Belongs to the UPF0739 family.</text>
</comment>